<feature type="chain" id="PRO_1000063702" description="UPF0213 protein YpsIP31758_3578">
    <location>
        <begin position="1"/>
        <end position="95"/>
    </location>
</feature>
<feature type="domain" description="GIY-YIG" evidence="1">
    <location>
        <begin position="4"/>
        <end position="79"/>
    </location>
</feature>
<gene>
    <name type="ordered locus">YpsIP31758_3578</name>
</gene>
<protein>
    <recommendedName>
        <fullName evidence="1">UPF0213 protein YpsIP31758_3578</fullName>
    </recommendedName>
</protein>
<comment type="similarity">
    <text evidence="1">Belongs to the UPF0213 family.</text>
</comment>
<organism>
    <name type="scientific">Yersinia pseudotuberculosis serotype O:1b (strain IP 31758)</name>
    <dbReference type="NCBI Taxonomy" id="349747"/>
    <lineage>
        <taxon>Bacteria</taxon>
        <taxon>Pseudomonadati</taxon>
        <taxon>Pseudomonadota</taxon>
        <taxon>Gammaproteobacteria</taxon>
        <taxon>Enterobacterales</taxon>
        <taxon>Yersiniaceae</taxon>
        <taxon>Yersinia</taxon>
    </lineage>
</organism>
<sequence length="95" mass="10687">MSDSLWHLYLLRTASGMLYTGITTDVARRLAQHQAGKGAKALRGKGELTLVFHCEAGDRSTALKLEYRVKQLSKQQKEKLVIDQPRLLTTLFLDS</sequence>
<proteinExistence type="inferred from homology"/>
<name>Y3578_YERP3</name>
<dbReference type="EMBL" id="CP000720">
    <property type="protein sequence ID" value="ABS46717.1"/>
    <property type="molecule type" value="Genomic_DNA"/>
</dbReference>
<dbReference type="RefSeq" id="WP_002209274.1">
    <property type="nucleotide sequence ID" value="NC_009708.1"/>
</dbReference>
<dbReference type="SMR" id="A7FMQ4"/>
<dbReference type="KEGG" id="ypi:YpsIP31758_3578"/>
<dbReference type="HOGENOM" id="CLU_135650_0_0_6"/>
<dbReference type="Proteomes" id="UP000002412">
    <property type="component" value="Chromosome"/>
</dbReference>
<dbReference type="CDD" id="cd10456">
    <property type="entry name" value="GIY-YIG_UPF0213"/>
    <property type="match status" value="1"/>
</dbReference>
<dbReference type="Gene3D" id="3.40.1440.10">
    <property type="entry name" value="GIY-YIG endonuclease"/>
    <property type="match status" value="1"/>
</dbReference>
<dbReference type="HAMAP" id="MF_01029">
    <property type="entry name" value="UPF0213"/>
    <property type="match status" value="1"/>
</dbReference>
<dbReference type="InterPro" id="IPR000305">
    <property type="entry name" value="GIY-YIG_endonuc"/>
</dbReference>
<dbReference type="InterPro" id="IPR035901">
    <property type="entry name" value="GIY-YIG_endonuc_sf"/>
</dbReference>
<dbReference type="InterPro" id="IPR050190">
    <property type="entry name" value="UPF0213_domain"/>
</dbReference>
<dbReference type="InterPro" id="IPR022992">
    <property type="entry name" value="UPF0213_GIY-YIG_endonuc"/>
</dbReference>
<dbReference type="PANTHER" id="PTHR34477">
    <property type="entry name" value="UPF0213 PROTEIN YHBQ"/>
    <property type="match status" value="1"/>
</dbReference>
<dbReference type="PANTHER" id="PTHR34477:SF1">
    <property type="entry name" value="UPF0213 PROTEIN YHBQ"/>
    <property type="match status" value="1"/>
</dbReference>
<dbReference type="Pfam" id="PF01541">
    <property type="entry name" value="GIY-YIG"/>
    <property type="match status" value="1"/>
</dbReference>
<dbReference type="SUPFAM" id="SSF82771">
    <property type="entry name" value="GIY-YIG endonuclease"/>
    <property type="match status" value="1"/>
</dbReference>
<dbReference type="PROSITE" id="PS50164">
    <property type="entry name" value="GIY_YIG"/>
    <property type="match status" value="1"/>
</dbReference>
<reference key="1">
    <citation type="journal article" date="2007" name="PLoS Genet.">
        <title>The complete genome sequence of Yersinia pseudotuberculosis IP31758, the causative agent of Far East scarlet-like fever.</title>
        <authorList>
            <person name="Eppinger M."/>
            <person name="Rosovitz M.J."/>
            <person name="Fricke W.F."/>
            <person name="Rasko D.A."/>
            <person name="Kokorina G."/>
            <person name="Fayolle C."/>
            <person name="Lindler L.E."/>
            <person name="Carniel E."/>
            <person name="Ravel J."/>
        </authorList>
    </citation>
    <scope>NUCLEOTIDE SEQUENCE [LARGE SCALE GENOMIC DNA]</scope>
    <source>
        <strain>IP 31758</strain>
    </source>
</reference>
<accession>A7FMQ4</accession>
<evidence type="ECO:0000255" key="1">
    <source>
        <dbReference type="HAMAP-Rule" id="MF_01029"/>
    </source>
</evidence>